<gene>
    <name type="primary">EIF4A2</name>
    <name type="ORF">QnpA-20305</name>
</gene>
<protein>
    <recommendedName>
        <fullName>Eukaryotic initiation factor 4A-II</fullName>
        <shortName>eIF-4A-II</shortName>
        <shortName>eIF4A-II</shortName>
        <ecNumber>3.6.4.13</ecNumber>
    </recommendedName>
    <alternativeName>
        <fullName>ATP-dependent RNA helicase eIF4A-2</fullName>
    </alternativeName>
</protein>
<feature type="chain" id="PRO_0000054939" description="Eukaryotic initiation factor 4A-II">
    <location>
        <begin position="1"/>
        <end position="408"/>
    </location>
</feature>
<feature type="domain" description="Helicase ATP-binding" evidence="3">
    <location>
        <begin position="65"/>
        <end position="236"/>
    </location>
</feature>
<feature type="domain" description="Helicase C-terminal" evidence="4">
    <location>
        <begin position="247"/>
        <end position="408"/>
    </location>
</feature>
<feature type="region of interest" description="Disordered" evidence="5">
    <location>
        <begin position="1"/>
        <end position="22"/>
    </location>
</feature>
<feature type="short sequence motif" description="Q motif">
    <location>
        <begin position="34"/>
        <end position="62"/>
    </location>
</feature>
<feature type="short sequence motif" description="DEAD box">
    <location>
        <begin position="183"/>
        <end position="186"/>
    </location>
</feature>
<feature type="binding site" evidence="3">
    <location>
        <begin position="77"/>
        <end position="84"/>
    </location>
    <ligand>
        <name>ATP</name>
        <dbReference type="ChEBI" id="CHEBI:30616"/>
    </ligand>
</feature>
<feature type="modified residue" description="Phosphothreonine" evidence="2">
    <location>
        <position position="160"/>
    </location>
</feature>
<name>IF4A2_MACFA</name>
<keyword id="KW-0067">ATP-binding</keyword>
<keyword id="KW-0347">Helicase</keyword>
<keyword id="KW-0378">Hydrolase</keyword>
<keyword id="KW-0396">Initiation factor</keyword>
<keyword id="KW-0547">Nucleotide-binding</keyword>
<keyword id="KW-0597">Phosphoprotein</keyword>
<keyword id="KW-0648">Protein biosynthesis</keyword>
<keyword id="KW-1185">Reference proteome</keyword>
<keyword id="KW-0694">RNA-binding</keyword>
<dbReference type="EC" id="3.6.4.13"/>
<dbReference type="EMBL" id="AB169755">
    <property type="protein sequence ID" value="BAE01836.1"/>
    <property type="molecule type" value="mRNA"/>
</dbReference>
<dbReference type="RefSeq" id="NP_001271641.1">
    <property type="nucleotide sequence ID" value="NM_001284712.1"/>
</dbReference>
<dbReference type="SMR" id="Q4R4Y9"/>
<dbReference type="STRING" id="9541.ENSMFAP00000026616"/>
<dbReference type="eggNOG" id="KOG0327">
    <property type="taxonomic scope" value="Eukaryota"/>
</dbReference>
<dbReference type="Proteomes" id="UP000233100">
    <property type="component" value="Unplaced"/>
</dbReference>
<dbReference type="GO" id="GO:0005524">
    <property type="term" value="F:ATP binding"/>
    <property type="evidence" value="ECO:0007669"/>
    <property type="project" value="UniProtKB-KW"/>
</dbReference>
<dbReference type="GO" id="GO:0016887">
    <property type="term" value="F:ATP hydrolysis activity"/>
    <property type="evidence" value="ECO:0007669"/>
    <property type="project" value="RHEA"/>
</dbReference>
<dbReference type="GO" id="GO:0003723">
    <property type="term" value="F:RNA binding"/>
    <property type="evidence" value="ECO:0007669"/>
    <property type="project" value="UniProtKB-KW"/>
</dbReference>
<dbReference type="GO" id="GO:0003724">
    <property type="term" value="F:RNA helicase activity"/>
    <property type="evidence" value="ECO:0007669"/>
    <property type="project" value="UniProtKB-EC"/>
</dbReference>
<dbReference type="GO" id="GO:0003743">
    <property type="term" value="F:translation initiation factor activity"/>
    <property type="evidence" value="ECO:0007669"/>
    <property type="project" value="UniProtKB-KW"/>
</dbReference>
<dbReference type="CDD" id="cd18046">
    <property type="entry name" value="DEADc_EIF4AII_EIF4AI_DDX2"/>
    <property type="match status" value="1"/>
</dbReference>
<dbReference type="CDD" id="cd18787">
    <property type="entry name" value="SF2_C_DEAD"/>
    <property type="match status" value="1"/>
</dbReference>
<dbReference type="FunFam" id="3.40.50.300:FF:000089">
    <property type="entry name" value="Eukaryotic initiation factor 4A-II"/>
    <property type="match status" value="1"/>
</dbReference>
<dbReference type="FunFam" id="3.40.50.300:FF:000031">
    <property type="entry name" value="Eukaryotic initiation factor 4A-III"/>
    <property type="match status" value="1"/>
</dbReference>
<dbReference type="Gene3D" id="3.40.50.300">
    <property type="entry name" value="P-loop containing nucleotide triphosphate hydrolases"/>
    <property type="match status" value="2"/>
</dbReference>
<dbReference type="InterPro" id="IPR011545">
    <property type="entry name" value="DEAD/DEAH_box_helicase_dom"/>
</dbReference>
<dbReference type="InterPro" id="IPR044728">
    <property type="entry name" value="EIF4A_DEADc"/>
</dbReference>
<dbReference type="InterPro" id="IPR014001">
    <property type="entry name" value="Helicase_ATP-bd"/>
</dbReference>
<dbReference type="InterPro" id="IPR001650">
    <property type="entry name" value="Helicase_C-like"/>
</dbReference>
<dbReference type="InterPro" id="IPR027417">
    <property type="entry name" value="P-loop_NTPase"/>
</dbReference>
<dbReference type="InterPro" id="IPR014014">
    <property type="entry name" value="RNA_helicase_DEAD_Q_motif"/>
</dbReference>
<dbReference type="PANTHER" id="PTHR47958">
    <property type="entry name" value="ATP-DEPENDENT RNA HELICASE DBP3"/>
    <property type="match status" value="1"/>
</dbReference>
<dbReference type="Pfam" id="PF00270">
    <property type="entry name" value="DEAD"/>
    <property type="match status" value="1"/>
</dbReference>
<dbReference type="Pfam" id="PF00271">
    <property type="entry name" value="Helicase_C"/>
    <property type="match status" value="1"/>
</dbReference>
<dbReference type="SMART" id="SM00487">
    <property type="entry name" value="DEXDc"/>
    <property type="match status" value="1"/>
</dbReference>
<dbReference type="SMART" id="SM00490">
    <property type="entry name" value="HELICc"/>
    <property type="match status" value="1"/>
</dbReference>
<dbReference type="SUPFAM" id="SSF52540">
    <property type="entry name" value="P-loop containing nucleoside triphosphate hydrolases"/>
    <property type="match status" value="2"/>
</dbReference>
<dbReference type="PROSITE" id="PS51192">
    <property type="entry name" value="HELICASE_ATP_BIND_1"/>
    <property type="match status" value="1"/>
</dbReference>
<dbReference type="PROSITE" id="PS51194">
    <property type="entry name" value="HELICASE_CTER"/>
    <property type="match status" value="1"/>
</dbReference>
<dbReference type="PROSITE" id="PS51195">
    <property type="entry name" value="Q_MOTIF"/>
    <property type="match status" value="1"/>
</dbReference>
<reference key="1">
    <citation type="submission" date="2005-06" db="EMBL/GenBank/DDBJ databases">
        <title>DNA sequences of macaque genes expressed in brain or testis and its evolutionary implications.</title>
        <authorList>
            <consortium name="International consortium for macaque cDNA sequencing and analysis"/>
        </authorList>
    </citation>
    <scope>NUCLEOTIDE SEQUENCE [LARGE SCALE MRNA]</scope>
    <source>
        <tissue>Parietal cortex</tissue>
    </source>
</reference>
<organism>
    <name type="scientific">Macaca fascicularis</name>
    <name type="common">Crab-eating macaque</name>
    <name type="synonym">Cynomolgus monkey</name>
    <dbReference type="NCBI Taxonomy" id="9541"/>
    <lineage>
        <taxon>Eukaryota</taxon>
        <taxon>Metazoa</taxon>
        <taxon>Chordata</taxon>
        <taxon>Craniata</taxon>
        <taxon>Vertebrata</taxon>
        <taxon>Euteleostomi</taxon>
        <taxon>Mammalia</taxon>
        <taxon>Eutheria</taxon>
        <taxon>Euarchontoglires</taxon>
        <taxon>Primates</taxon>
        <taxon>Haplorrhini</taxon>
        <taxon>Catarrhini</taxon>
        <taxon>Cercopithecidae</taxon>
        <taxon>Cercopithecinae</taxon>
        <taxon>Macaca</taxon>
    </lineage>
</organism>
<proteinExistence type="evidence at transcript level"/>
<sequence>MSGGSADYNSREHGGPEGMDPDGVIESNWNEIVDNFDDMNLKESLLRGIYAYGFEKPSAIQQRAIIPCIKGYDVIAQAQSGTGKTATFAISILQQLEIEFKETQALVLAPTRELAQQIQKVILALGDYMGATCHACIGGTNVRNEMQKLQAEAPHIVVGTPGRVFDMLNRRYLSPKWIKMFVLDEADGMLSRGFKDQIYEIFQKLNTSIQVVLLSATMPTDVLEVTKKFMRDPIRILVKKEELTLEGIKQFYINVEREEWKLDTLCDLYETLTITQAVIFLNTRRKVDWLTEKMHARDFTVSALHGDMDQKERDVIMREFRSGSSRVLITTDLLARGIDVQQVSLVINYDLPTNRENYIHRIGRGGRFGRKGVAINFVTEEDKRILRDIETFYNTTVEEMPMNVADLI</sequence>
<accession>Q4R4Y9</accession>
<comment type="function">
    <text evidence="1">ATP-dependent RNA helicase which is a subunit of the eIF4F complex involved in cap recognition and is required for mRNA binding to ribosome. In the current model of translation initiation, eIF4A unwinds RNA secondary structures in the 5'-UTR of mRNAs which is necessary to allow efficient binding of the small ribosomal subunit, and subsequent scanning for the initiator codon (By similarity).</text>
</comment>
<comment type="catalytic activity">
    <reaction>
        <text>ATP + H2O = ADP + phosphate + H(+)</text>
        <dbReference type="Rhea" id="RHEA:13065"/>
        <dbReference type="ChEBI" id="CHEBI:15377"/>
        <dbReference type="ChEBI" id="CHEBI:15378"/>
        <dbReference type="ChEBI" id="CHEBI:30616"/>
        <dbReference type="ChEBI" id="CHEBI:43474"/>
        <dbReference type="ChEBI" id="CHEBI:456216"/>
        <dbReference type="EC" id="3.6.4.13"/>
    </reaction>
</comment>
<comment type="subunit">
    <text evidence="1">eIF4F is a multi-subunit complex, the composition of which varies with external and internal environmental conditions. It is composed of at least EIF4A, EIF4E and EIF4G1/EIFFG3 (By similarity). Interacts with EIF4E. May interact with NOM1 (By similarity).</text>
</comment>
<comment type="similarity">
    <text evidence="6">Belongs to the DEAD box helicase family. eIF4A subfamily.</text>
</comment>
<evidence type="ECO:0000250" key="1"/>
<evidence type="ECO:0000250" key="2">
    <source>
        <dbReference type="UniProtKB" id="Q14240"/>
    </source>
</evidence>
<evidence type="ECO:0000255" key="3">
    <source>
        <dbReference type="PROSITE-ProRule" id="PRU00541"/>
    </source>
</evidence>
<evidence type="ECO:0000255" key="4">
    <source>
        <dbReference type="PROSITE-ProRule" id="PRU00542"/>
    </source>
</evidence>
<evidence type="ECO:0000256" key="5">
    <source>
        <dbReference type="SAM" id="MobiDB-lite"/>
    </source>
</evidence>
<evidence type="ECO:0000305" key="6"/>